<comment type="function">
    <text evidence="1">Catalyzes the interconversion of 2-phosphoglycerate and 3-phosphoglycerate.</text>
</comment>
<comment type="catalytic activity">
    <reaction evidence="1">
        <text>(2R)-2-phosphoglycerate = (2R)-3-phosphoglycerate</text>
        <dbReference type="Rhea" id="RHEA:15901"/>
        <dbReference type="ChEBI" id="CHEBI:58272"/>
        <dbReference type="ChEBI" id="CHEBI:58289"/>
        <dbReference type="EC" id="5.4.2.12"/>
    </reaction>
</comment>
<comment type="pathway">
    <text evidence="1">Carbohydrate degradation; glycolysis; pyruvate from D-glyceraldehyde 3-phosphate: step 3/5.</text>
</comment>
<comment type="similarity">
    <text evidence="1">Belongs to the BPG-independent phosphoglycerate mutase family. A-PGAM subfamily.</text>
</comment>
<name>APGM_METLZ</name>
<dbReference type="EC" id="5.4.2.12" evidence="1"/>
<dbReference type="EMBL" id="CP000559">
    <property type="protein sequence ID" value="ABN06818.1"/>
    <property type="molecule type" value="Genomic_DNA"/>
</dbReference>
<dbReference type="RefSeq" id="WP_011833019.1">
    <property type="nucleotide sequence ID" value="NC_008942.1"/>
</dbReference>
<dbReference type="SMR" id="A2SR62"/>
<dbReference type="STRING" id="410358.Mlab_0645"/>
<dbReference type="GeneID" id="4794934"/>
<dbReference type="KEGG" id="mla:Mlab_0645"/>
<dbReference type="eggNOG" id="arCOG01696">
    <property type="taxonomic scope" value="Archaea"/>
</dbReference>
<dbReference type="HOGENOM" id="CLU_034906_2_0_2"/>
<dbReference type="OrthoDB" id="52918at2157"/>
<dbReference type="UniPathway" id="UPA00109">
    <property type="reaction ID" value="UER00186"/>
</dbReference>
<dbReference type="Proteomes" id="UP000000365">
    <property type="component" value="Chromosome"/>
</dbReference>
<dbReference type="GO" id="GO:0046872">
    <property type="term" value="F:metal ion binding"/>
    <property type="evidence" value="ECO:0007669"/>
    <property type="project" value="InterPro"/>
</dbReference>
<dbReference type="GO" id="GO:0004619">
    <property type="term" value="F:phosphoglycerate mutase activity"/>
    <property type="evidence" value="ECO:0007669"/>
    <property type="project" value="UniProtKB-EC"/>
</dbReference>
<dbReference type="GO" id="GO:0006096">
    <property type="term" value="P:glycolytic process"/>
    <property type="evidence" value="ECO:0007669"/>
    <property type="project" value="UniProtKB-UniRule"/>
</dbReference>
<dbReference type="CDD" id="cd16011">
    <property type="entry name" value="iPGM_like"/>
    <property type="match status" value="1"/>
</dbReference>
<dbReference type="Gene3D" id="3.40.720.10">
    <property type="entry name" value="Alkaline Phosphatase, subunit A"/>
    <property type="match status" value="2"/>
</dbReference>
<dbReference type="HAMAP" id="MF_01402_A">
    <property type="entry name" value="ApgM_A"/>
    <property type="match status" value="1"/>
</dbReference>
<dbReference type="InterPro" id="IPR017850">
    <property type="entry name" value="Alkaline_phosphatase_core_sf"/>
</dbReference>
<dbReference type="InterPro" id="IPR023665">
    <property type="entry name" value="ApgAM_prokaryotes"/>
</dbReference>
<dbReference type="InterPro" id="IPR006124">
    <property type="entry name" value="Metalloenzyme"/>
</dbReference>
<dbReference type="InterPro" id="IPR004456">
    <property type="entry name" value="Pglycerate_mutase_ApgM"/>
</dbReference>
<dbReference type="NCBIfam" id="TIGR00306">
    <property type="entry name" value="apgM"/>
    <property type="match status" value="1"/>
</dbReference>
<dbReference type="NCBIfam" id="NF003104">
    <property type="entry name" value="PRK04024.1"/>
    <property type="match status" value="1"/>
</dbReference>
<dbReference type="PANTHER" id="PTHR31209">
    <property type="entry name" value="COFACTOR-INDEPENDENT PHOSPHOGLYCERATE MUTASE"/>
    <property type="match status" value="1"/>
</dbReference>
<dbReference type="PANTHER" id="PTHR31209:SF0">
    <property type="entry name" value="METALLOENZYME DOMAIN-CONTAINING PROTEIN"/>
    <property type="match status" value="1"/>
</dbReference>
<dbReference type="Pfam" id="PF01676">
    <property type="entry name" value="Metalloenzyme"/>
    <property type="match status" value="1"/>
</dbReference>
<dbReference type="Pfam" id="PF10143">
    <property type="entry name" value="PhosphMutase"/>
    <property type="match status" value="1"/>
</dbReference>
<dbReference type="PIRSF" id="PIRSF006392">
    <property type="entry name" value="IPGAM_arch"/>
    <property type="match status" value="1"/>
</dbReference>
<dbReference type="SUPFAM" id="SSF53649">
    <property type="entry name" value="Alkaline phosphatase-like"/>
    <property type="match status" value="1"/>
</dbReference>
<accession>A2SR62</accession>
<proteinExistence type="inferred from homology"/>
<gene>
    <name evidence="1" type="primary">apgM</name>
    <name type="ordered locus">Mlab_0645</name>
</gene>
<evidence type="ECO:0000255" key="1">
    <source>
        <dbReference type="HAMAP-Rule" id="MF_01402"/>
    </source>
</evidence>
<evidence type="ECO:0000256" key="2">
    <source>
        <dbReference type="SAM" id="MobiDB-lite"/>
    </source>
</evidence>
<protein>
    <recommendedName>
        <fullName evidence="1">2,3-bisphosphoglycerate-independent phosphoglycerate mutase</fullName>
        <shortName evidence="1">BPG-independent PGAM</shortName>
        <shortName evidence="1">Phosphoglyceromutase</shortName>
        <shortName evidence="1">aPGAM</shortName>
        <ecNumber evidence="1">5.4.2.12</ecNumber>
    </recommendedName>
</protein>
<organism>
    <name type="scientific">Methanocorpusculum labreanum (strain ATCC 43576 / DSM 4855 / Z)</name>
    <dbReference type="NCBI Taxonomy" id="410358"/>
    <lineage>
        <taxon>Archaea</taxon>
        <taxon>Methanobacteriati</taxon>
        <taxon>Methanobacteriota</taxon>
        <taxon>Stenosarchaea group</taxon>
        <taxon>Methanomicrobia</taxon>
        <taxon>Methanomicrobiales</taxon>
        <taxon>Methanocorpusculaceae</taxon>
        <taxon>Methanocorpusculum</taxon>
    </lineage>
</organism>
<feature type="chain" id="PRO_1000068382" description="2,3-bisphosphoglycerate-independent phosphoglycerate mutase">
    <location>
        <begin position="1"/>
        <end position="406"/>
    </location>
</feature>
<feature type="region of interest" description="Disordered" evidence="2">
    <location>
        <begin position="164"/>
        <end position="184"/>
    </location>
</feature>
<reference key="1">
    <citation type="journal article" date="2009" name="Stand. Genomic Sci.">
        <title>Complete genome sequence of Methanocorpusculum labreanum type strain Z.</title>
        <authorList>
            <person name="Anderson I.J."/>
            <person name="Sieprawska-Lupa M."/>
            <person name="Goltsman E."/>
            <person name="Lapidus A."/>
            <person name="Copeland A."/>
            <person name="Glavina Del Rio T."/>
            <person name="Tice H."/>
            <person name="Dalin E."/>
            <person name="Barry K."/>
            <person name="Pitluck S."/>
            <person name="Hauser L."/>
            <person name="Land M."/>
            <person name="Lucas S."/>
            <person name="Richardson P."/>
            <person name="Whitman W.B."/>
            <person name="Kyrpides N.C."/>
        </authorList>
    </citation>
    <scope>NUCLEOTIDE SEQUENCE [LARGE SCALE GENOMIC DNA]</scope>
    <source>
        <strain>ATCC 43576 / DSM 4855 / Z</strain>
    </source>
</reference>
<keyword id="KW-0324">Glycolysis</keyword>
<keyword id="KW-0413">Isomerase</keyword>
<keyword id="KW-1185">Reference proteome</keyword>
<sequence>MTASKILLLIIDGVGDRPCGVLGNKTPLQAAKIPNLDRLATEGICGIMDPIAPGVRGGSDTSHLSLLGYDPHIYYTGRGPLEAAGCGIKMEPGMIGFRANYATIDDDGNVIDRRAGRIPDTTEITAAVKNGVDLSKYGVEIEFSPGTGHRAALALKGKGLSAAVSSNDPKKTGVQPKTIHPDDDSKEAAFTAEVCNEFSRQAAEILKNHPVNLERKARGEFPANVVLIRGAGEMGVYETFEEKHELSGSVVAAAALIAGIGSSVGLERIPVLPTTPLDEQVRLVCRELEKKDFVLFNVKTADEYGHDGKAVEKTKYLEEVDAALLPFFDMPELMIAVCGDHSTPCTIKEHSADPVPLILHGDGTRIDLVTNYDEISCAAGGLCRISGGSLMPILLDLIDKTHKYGA</sequence>